<accession>P0AAK1</accession>
<accession>P16428</accession>
<accession>Q2MAA5</accession>
<accession>Q46883</accession>
<organism>
    <name type="scientific">Escherichia coli (strain K12)</name>
    <dbReference type="NCBI Taxonomy" id="83333"/>
    <lineage>
        <taxon>Bacteria</taxon>
        <taxon>Pseudomonadati</taxon>
        <taxon>Pseudomonadota</taxon>
        <taxon>Gammaproteobacteria</taxon>
        <taxon>Enterobacterales</taxon>
        <taxon>Enterobacteriaceae</taxon>
        <taxon>Escherichia</taxon>
    </lineage>
</organism>
<reference key="1">
    <citation type="journal article" date="1990" name="Mol. Microbiol.">
        <title>Nucleotide sequence and expression of an operon in Escherichia coli coding for formate hydrogenlyase components.</title>
        <authorList>
            <person name="Boehm R."/>
            <person name="Sauter M."/>
            <person name="Boeck A."/>
        </authorList>
    </citation>
    <scope>NUCLEOTIDE SEQUENCE [GENOMIC DNA]</scope>
    <source>
        <strain>K12 / MC4100 / ATCC 35695 / DSM 6574</strain>
    </source>
</reference>
<reference key="2">
    <citation type="journal article" date="1997" name="Science">
        <title>The complete genome sequence of Escherichia coli K-12.</title>
        <authorList>
            <person name="Blattner F.R."/>
            <person name="Plunkett G. III"/>
            <person name="Bloch C.A."/>
            <person name="Perna N.T."/>
            <person name="Burland V."/>
            <person name="Riley M."/>
            <person name="Collado-Vides J."/>
            <person name="Glasner J.D."/>
            <person name="Rode C.K."/>
            <person name="Mayhew G.F."/>
            <person name="Gregor J."/>
            <person name="Davis N.W."/>
            <person name="Kirkpatrick H.A."/>
            <person name="Goeden M.A."/>
            <person name="Rose D.J."/>
            <person name="Mau B."/>
            <person name="Shao Y."/>
        </authorList>
    </citation>
    <scope>NUCLEOTIDE SEQUENCE [LARGE SCALE GENOMIC DNA]</scope>
    <source>
        <strain>K12 / MG1655 / ATCC 47076</strain>
    </source>
</reference>
<reference key="3">
    <citation type="journal article" date="2006" name="Mol. Syst. Biol.">
        <title>Highly accurate genome sequences of Escherichia coli K-12 strains MG1655 and W3110.</title>
        <authorList>
            <person name="Hayashi K."/>
            <person name="Morooka N."/>
            <person name="Yamamoto Y."/>
            <person name="Fujita K."/>
            <person name="Isono K."/>
            <person name="Choi S."/>
            <person name="Ohtsubo E."/>
            <person name="Baba T."/>
            <person name="Wanner B.L."/>
            <person name="Mori H."/>
            <person name="Horiuchi T."/>
        </authorList>
    </citation>
    <scope>NUCLEOTIDE SEQUENCE [LARGE SCALE GENOMIC DNA]</scope>
    <source>
        <strain>K12 / W3110 / ATCC 27325 / DSM 5911</strain>
    </source>
</reference>
<gene>
    <name type="primary">hycB</name>
    <name type="synonym">hevB</name>
    <name type="ordered locus">b2724</name>
    <name type="ordered locus">JW2694</name>
</gene>
<name>HYCB_ECOLI</name>
<sequence>MNRFVIADSTLCIGCHTCEAACSETHRQHGLQSMPRLRVMLNEKESAPQLCHHCEDAPCAVVCPVNAITRVDGAVQLNESLCVSCKLCGIACPFGAIEFSGSRPLDIPANANTPKAPPAPPAPARVSTLLDWVPGIRAIAVKCDLCSFDEQGPACVRMCPTKALHLVDNTDIARVSKRKRELTFNTDFGDLTLFQQAQSGEAK</sequence>
<dbReference type="EMBL" id="X17506">
    <property type="protein sequence ID" value="CAA35547.1"/>
    <property type="molecule type" value="Genomic_DNA"/>
</dbReference>
<dbReference type="EMBL" id="U29579">
    <property type="protein sequence ID" value="AAA69234.1"/>
    <property type="molecule type" value="Genomic_DNA"/>
</dbReference>
<dbReference type="EMBL" id="U00096">
    <property type="protein sequence ID" value="AAC75766.1"/>
    <property type="molecule type" value="Genomic_DNA"/>
</dbReference>
<dbReference type="EMBL" id="AP009048">
    <property type="protein sequence ID" value="BAE76801.1"/>
    <property type="molecule type" value="Genomic_DNA"/>
</dbReference>
<dbReference type="PIR" id="H65052">
    <property type="entry name" value="H65052"/>
</dbReference>
<dbReference type="RefSeq" id="NP_417204.1">
    <property type="nucleotide sequence ID" value="NC_000913.3"/>
</dbReference>
<dbReference type="RefSeq" id="WP_001079186.1">
    <property type="nucleotide sequence ID" value="NZ_STEB01000027.1"/>
</dbReference>
<dbReference type="PDB" id="7Z0S">
    <property type="method" value="EM"/>
    <property type="resolution" value="2.60 A"/>
    <property type="chains" value="B=1-203"/>
</dbReference>
<dbReference type="PDB" id="7Z0T">
    <property type="method" value="EM"/>
    <property type="resolution" value="3.40 A"/>
    <property type="chains" value="B=1-203"/>
</dbReference>
<dbReference type="PDBsum" id="7Z0S"/>
<dbReference type="PDBsum" id="7Z0T"/>
<dbReference type="EMDB" id="EMD-14429"/>
<dbReference type="EMDB" id="EMD-14430"/>
<dbReference type="SMR" id="P0AAK1"/>
<dbReference type="BioGRID" id="4262103">
    <property type="interactions" value="9"/>
</dbReference>
<dbReference type="ComplexPortal" id="CPX-317">
    <property type="entry name" value="Formate hydrogenlyase-H/Hydrogenase-3 complex"/>
</dbReference>
<dbReference type="FunCoup" id="P0AAK1">
    <property type="interactions" value="141"/>
</dbReference>
<dbReference type="IntAct" id="P0AAK1">
    <property type="interactions" value="4"/>
</dbReference>
<dbReference type="MINT" id="P0AAK1"/>
<dbReference type="STRING" id="511145.b2724"/>
<dbReference type="PaxDb" id="511145-b2724"/>
<dbReference type="EnsemblBacteria" id="AAC75766">
    <property type="protein sequence ID" value="AAC75766"/>
    <property type="gene ID" value="b2724"/>
</dbReference>
<dbReference type="GeneID" id="86860821"/>
<dbReference type="GeneID" id="948002"/>
<dbReference type="KEGG" id="ecj:JW2694"/>
<dbReference type="KEGG" id="eco:b2724"/>
<dbReference type="KEGG" id="ecoc:C3026_14985"/>
<dbReference type="PATRIC" id="fig|1411691.4.peg.4017"/>
<dbReference type="EchoBASE" id="EB0470"/>
<dbReference type="eggNOG" id="COG1142">
    <property type="taxonomic scope" value="Bacteria"/>
</dbReference>
<dbReference type="HOGENOM" id="CLU_043374_3_0_6"/>
<dbReference type="InParanoid" id="P0AAK1"/>
<dbReference type="OMA" id="VRTCPTK"/>
<dbReference type="OrthoDB" id="9779457at2"/>
<dbReference type="PhylomeDB" id="P0AAK1"/>
<dbReference type="BioCyc" id="EcoCyc:HYCBSMALL-MONOMER"/>
<dbReference type="BioCyc" id="MetaCyc:HYCBSMALL-MONOMER"/>
<dbReference type="PRO" id="PR:P0AAK1"/>
<dbReference type="Proteomes" id="UP000000625">
    <property type="component" value="Chromosome"/>
</dbReference>
<dbReference type="GO" id="GO:0009326">
    <property type="term" value="C:formate dehydrogenase complex"/>
    <property type="evidence" value="ECO:0000353"/>
    <property type="project" value="ComplexPortal"/>
</dbReference>
<dbReference type="GO" id="GO:0051539">
    <property type="term" value="F:4 iron, 4 sulfur cluster binding"/>
    <property type="evidence" value="ECO:0007669"/>
    <property type="project" value="UniProtKB-KW"/>
</dbReference>
<dbReference type="GO" id="GO:0046872">
    <property type="term" value="F:metal ion binding"/>
    <property type="evidence" value="ECO:0007669"/>
    <property type="project" value="UniProtKB-KW"/>
</dbReference>
<dbReference type="GO" id="GO:0019645">
    <property type="term" value="P:anaerobic electron transport chain"/>
    <property type="evidence" value="ECO:0000314"/>
    <property type="project" value="ComplexPortal"/>
</dbReference>
<dbReference type="GO" id="GO:0009061">
    <property type="term" value="P:anaerobic respiration"/>
    <property type="evidence" value="ECO:0000314"/>
    <property type="project" value="ComplexPortal"/>
</dbReference>
<dbReference type="GO" id="GO:0015944">
    <property type="term" value="P:formate oxidation"/>
    <property type="evidence" value="ECO:0000314"/>
    <property type="project" value="ComplexPortal"/>
</dbReference>
<dbReference type="GO" id="GO:0006007">
    <property type="term" value="P:glucose catabolic process"/>
    <property type="evidence" value="ECO:0000314"/>
    <property type="project" value="ComplexPortal"/>
</dbReference>
<dbReference type="CDD" id="cd10554">
    <property type="entry name" value="HycB_like"/>
    <property type="match status" value="1"/>
</dbReference>
<dbReference type="FunFam" id="3.30.70.20:FF:000036">
    <property type="entry name" value="4Fe-4S dicluster domain-containing protein"/>
    <property type="match status" value="1"/>
</dbReference>
<dbReference type="Gene3D" id="3.30.70.20">
    <property type="match status" value="2"/>
</dbReference>
<dbReference type="InterPro" id="IPR017896">
    <property type="entry name" value="4Fe4S_Fe-S-bd"/>
</dbReference>
<dbReference type="InterPro" id="IPR017900">
    <property type="entry name" value="4Fe4S_Fe_S_CS"/>
</dbReference>
<dbReference type="InterPro" id="IPR050294">
    <property type="entry name" value="RnfB_subfamily"/>
</dbReference>
<dbReference type="PANTHER" id="PTHR42859:SF16">
    <property type="entry name" value="FORMATE HYDROGENLYASE SUBUNIT 2-RELATED"/>
    <property type="match status" value="1"/>
</dbReference>
<dbReference type="PANTHER" id="PTHR42859">
    <property type="entry name" value="OXIDOREDUCTASE"/>
    <property type="match status" value="1"/>
</dbReference>
<dbReference type="Pfam" id="PF13247">
    <property type="entry name" value="Fer4_11"/>
    <property type="match status" value="1"/>
</dbReference>
<dbReference type="SUPFAM" id="SSF54862">
    <property type="entry name" value="4Fe-4S ferredoxins"/>
    <property type="match status" value="1"/>
</dbReference>
<dbReference type="PROSITE" id="PS00198">
    <property type="entry name" value="4FE4S_FER_1"/>
    <property type="match status" value="1"/>
</dbReference>
<dbReference type="PROSITE" id="PS51379">
    <property type="entry name" value="4FE4S_FER_2"/>
    <property type="match status" value="4"/>
</dbReference>
<feature type="chain" id="PRO_0000159263" description="Formate hydrogenlyase subunit 2">
    <location>
        <begin position="1"/>
        <end position="203"/>
    </location>
</feature>
<feature type="domain" description="4Fe-4S ferredoxin-type 1" evidence="2">
    <location>
        <begin position="2"/>
        <end position="32"/>
    </location>
</feature>
<feature type="domain" description="4Fe-4S ferredoxin-type 2" evidence="2">
    <location>
        <begin position="42"/>
        <end position="72"/>
    </location>
</feature>
<feature type="domain" description="4Fe-4S ferredoxin-type 3" evidence="2">
    <location>
        <begin position="73"/>
        <end position="102"/>
    </location>
</feature>
<feature type="domain" description="4Fe-4S ferredoxin-type 4" evidence="2">
    <location>
        <begin position="137"/>
        <end position="169"/>
    </location>
</feature>
<feature type="binding site" evidence="1">
    <location>
        <position position="12"/>
    </location>
    <ligand>
        <name>[4Fe-4S] cluster</name>
        <dbReference type="ChEBI" id="CHEBI:49883"/>
        <label>1</label>
    </ligand>
</feature>
<feature type="binding site" evidence="1">
    <location>
        <position position="15"/>
    </location>
    <ligand>
        <name>[4Fe-4S] cluster</name>
        <dbReference type="ChEBI" id="CHEBI:49883"/>
        <label>1</label>
    </ligand>
</feature>
<feature type="binding site" evidence="1">
    <location>
        <position position="18"/>
    </location>
    <ligand>
        <name>[4Fe-4S] cluster</name>
        <dbReference type="ChEBI" id="CHEBI:49883"/>
        <label>1</label>
    </ligand>
</feature>
<feature type="binding site" evidence="1">
    <location>
        <position position="22"/>
    </location>
    <ligand>
        <name>[4Fe-4S] cluster</name>
        <dbReference type="ChEBI" id="CHEBI:49883"/>
        <label>2</label>
    </ligand>
</feature>
<feature type="binding site" evidence="1">
    <location>
        <position position="51"/>
    </location>
    <ligand>
        <name>[4Fe-4S] cluster</name>
        <dbReference type="ChEBI" id="CHEBI:49883"/>
        <label>3</label>
    </ligand>
</feature>
<feature type="binding site" evidence="1">
    <location>
        <position position="54"/>
    </location>
    <ligand>
        <name>[4Fe-4S] cluster</name>
        <dbReference type="ChEBI" id="CHEBI:49883"/>
        <label>3</label>
    </ligand>
</feature>
<feature type="binding site" evidence="1">
    <location>
        <position position="59"/>
    </location>
    <ligand>
        <name>[4Fe-4S] cluster</name>
        <dbReference type="ChEBI" id="CHEBI:49883"/>
        <label>3</label>
    </ligand>
</feature>
<feature type="binding site" evidence="1">
    <location>
        <position position="63"/>
    </location>
    <ligand>
        <name>[4Fe-4S] cluster</name>
        <dbReference type="ChEBI" id="CHEBI:49883"/>
        <label>4</label>
    </ligand>
</feature>
<feature type="binding site" evidence="1">
    <location>
        <position position="82"/>
    </location>
    <ligand>
        <name>[4Fe-4S] cluster</name>
        <dbReference type="ChEBI" id="CHEBI:49883"/>
        <label>4</label>
    </ligand>
</feature>
<feature type="binding site" evidence="1">
    <location>
        <position position="85"/>
    </location>
    <ligand>
        <name>[4Fe-4S] cluster</name>
        <dbReference type="ChEBI" id="CHEBI:49883"/>
        <label>4</label>
    </ligand>
</feature>
<feature type="binding site" evidence="1">
    <location>
        <position position="88"/>
    </location>
    <ligand>
        <name>[4Fe-4S] cluster</name>
        <dbReference type="ChEBI" id="CHEBI:49883"/>
        <label>4</label>
    </ligand>
</feature>
<feature type="binding site" evidence="1">
    <location>
        <position position="92"/>
    </location>
    <ligand>
        <name>[4Fe-4S] cluster</name>
        <dbReference type="ChEBI" id="CHEBI:49883"/>
        <label>3</label>
    </ligand>
</feature>
<feature type="binding site" evidence="1">
    <location>
        <position position="143"/>
    </location>
    <ligand>
        <name>[4Fe-4S] cluster</name>
        <dbReference type="ChEBI" id="CHEBI:49883"/>
        <label>2</label>
    </ligand>
</feature>
<feature type="binding site" evidence="1">
    <location>
        <position position="146"/>
    </location>
    <ligand>
        <name>[4Fe-4S] cluster</name>
        <dbReference type="ChEBI" id="CHEBI:49883"/>
        <label>2</label>
    </ligand>
</feature>
<feature type="binding site" evidence="1">
    <location>
        <position position="155"/>
    </location>
    <ligand>
        <name>[4Fe-4S] cluster</name>
        <dbReference type="ChEBI" id="CHEBI:49883"/>
        <label>2</label>
    </ligand>
</feature>
<feature type="binding site" evidence="1">
    <location>
        <position position="159"/>
    </location>
    <ligand>
        <name>[4Fe-4S] cluster</name>
        <dbReference type="ChEBI" id="CHEBI:49883"/>
        <label>1</label>
    </ligand>
</feature>
<feature type="sequence conflict" description="In Ref. 1; CAA35547." evidence="3" ref="1">
    <original>V</original>
    <variation>A</variation>
    <location>
        <position position="156"/>
    </location>
</feature>
<feature type="strand" evidence="4">
    <location>
        <begin position="3"/>
        <end position="7"/>
    </location>
</feature>
<feature type="turn" evidence="4">
    <location>
        <begin position="9"/>
        <end position="11"/>
    </location>
</feature>
<feature type="helix" evidence="4">
    <location>
        <begin position="17"/>
        <end position="28"/>
    </location>
</feature>
<feature type="strand" evidence="4">
    <location>
        <begin position="36"/>
        <end position="41"/>
    </location>
</feature>
<feature type="strand" evidence="4">
    <location>
        <begin position="46"/>
        <end position="49"/>
    </location>
</feature>
<feature type="helix" evidence="4">
    <location>
        <begin position="58"/>
        <end position="61"/>
    </location>
</feature>
<feature type="strand" evidence="4">
    <location>
        <begin position="68"/>
        <end position="71"/>
    </location>
</feature>
<feature type="strand" evidence="4">
    <location>
        <begin position="74"/>
        <end position="77"/>
    </location>
</feature>
<feature type="turn" evidence="4">
    <location>
        <begin position="79"/>
        <end position="81"/>
    </location>
</feature>
<feature type="helix" evidence="4">
    <location>
        <begin position="87"/>
        <end position="91"/>
    </location>
</feature>
<feature type="strand" evidence="4">
    <location>
        <begin position="98"/>
        <end position="100"/>
    </location>
</feature>
<feature type="turn" evidence="4">
    <location>
        <begin position="128"/>
        <end position="130"/>
    </location>
</feature>
<feature type="strand" evidence="4">
    <location>
        <begin position="139"/>
        <end position="141"/>
    </location>
</feature>
<feature type="turn" evidence="4">
    <location>
        <begin position="145"/>
        <end position="148"/>
    </location>
</feature>
<feature type="helix" evidence="4">
    <location>
        <begin position="154"/>
        <end position="157"/>
    </location>
</feature>
<feature type="strand" evidence="4">
    <location>
        <begin position="164"/>
        <end position="168"/>
    </location>
</feature>
<keyword id="KW-0002">3D-structure</keyword>
<keyword id="KW-0004">4Fe-4S</keyword>
<keyword id="KW-0249">Electron transport</keyword>
<keyword id="KW-0408">Iron</keyword>
<keyword id="KW-0411">Iron-sulfur</keyword>
<keyword id="KW-0479">Metal-binding</keyword>
<keyword id="KW-1185">Reference proteome</keyword>
<keyword id="KW-0677">Repeat</keyword>
<keyword id="KW-0813">Transport</keyword>
<protein>
    <recommendedName>
        <fullName>Formate hydrogenlyase subunit 2</fullName>
        <shortName>FHL subunit 2</shortName>
    </recommendedName>
    <alternativeName>
        <fullName>Hydrogenase-3 component B</fullName>
    </alternativeName>
</protein>
<evidence type="ECO:0000250" key="1"/>
<evidence type="ECO:0000255" key="2">
    <source>
        <dbReference type="PROSITE-ProRule" id="PRU00711"/>
    </source>
</evidence>
<evidence type="ECO:0000305" key="3"/>
<evidence type="ECO:0007829" key="4">
    <source>
        <dbReference type="PDB" id="7Z0S"/>
    </source>
</evidence>
<proteinExistence type="evidence at protein level"/>
<comment type="function">
    <text>Probable electron transfer protein for hydrogenase 3.</text>
</comment>
<comment type="cofactor">
    <cofactor evidence="1">
        <name>[4Fe-4S] cluster</name>
        <dbReference type="ChEBI" id="CHEBI:49883"/>
    </cofactor>
    <text evidence="1">Binds 4 [4Fe-4S] clusters.</text>
</comment>
<comment type="subunit">
    <text>FHL comprises of a formate dehydrogenase, unidentified electron carriers and a hydrogenase (isoenzyme 3). In this non-energy conserving pathway, molecular hydrogen and carbodioxide are released from formate.</text>
</comment>